<name>KAC6_RABIT</name>
<accession>P03984</accession>
<keyword id="KW-1015">Disulfide bond</keyword>
<keyword id="KW-0393">Immunoglobulin domain</keyword>
<keyword id="KW-1185">Reference proteome</keyword>
<organism>
    <name type="scientific">Oryctolagus cuniculus</name>
    <name type="common">Rabbit</name>
    <dbReference type="NCBI Taxonomy" id="9986"/>
    <lineage>
        <taxon>Eukaryota</taxon>
        <taxon>Metazoa</taxon>
        <taxon>Chordata</taxon>
        <taxon>Craniata</taxon>
        <taxon>Vertebrata</taxon>
        <taxon>Euteleostomi</taxon>
        <taxon>Mammalia</taxon>
        <taxon>Eutheria</taxon>
        <taxon>Euarchontoglires</taxon>
        <taxon>Glires</taxon>
        <taxon>Lagomorpha</taxon>
        <taxon>Leporidae</taxon>
        <taxon>Oryctolagus</taxon>
    </lineage>
</organism>
<feature type="chain" id="PRO_0000153601" description="Ig kappa chain b5 variant C region">
    <location>
        <begin position="1" status="less than"/>
        <end position="104"/>
    </location>
</feature>
<feature type="domain" description="Ig-like">
    <location>
        <begin position="5"/>
        <end position="100"/>
    </location>
</feature>
<feature type="disulfide bond" evidence="1">
    <location>
        <begin position="26"/>
        <end position="85"/>
    </location>
</feature>
<feature type="disulfide bond" description="Interchain (with a heavy chain)" evidence="1">
    <location>
        <position position="104"/>
    </location>
</feature>
<feature type="sequence conflict" description="In Ref. 2." evidence="2" ref="2">
    <original>A</original>
    <variation>VA</variation>
    <location>
        <position position="1"/>
    </location>
</feature>
<feature type="non-terminal residue">
    <location>
        <position position="1"/>
    </location>
</feature>
<evidence type="ECO:0000255" key="1">
    <source>
        <dbReference type="PROSITE-ProRule" id="PRU00114"/>
    </source>
</evidence>
<evidence type="ECO:0000305" key="2"/>
<proteinExistence type="evidence at transcript level"/>
<comment type="miscellaneous">
    <text>The cDNA from which this sequence was derived contains a terminator codon within the V-region coding region. The origin of this codon and of the differences between this and other sequenced b5 C regions are unclear. The cDNA clone was made using mRNA from trypanosome-infected b5-homozygous rabbits.</text>
</comment>
<dbReference type="EMBL" id="X00032">
    <property type="status" value="NOT_ANNOTATED_CDS"/>
    <property type="molecule type" value="mRNA"/>
</dbReference>
<dbReference type="EMBL" id="K01363">
    <property type="protein sequence ID" value="AAA31355.1"/>
    <property type="molecule type" value="Genomic_DNA"/>
</dbReference>
<dbReference type="PIR" id="A02124">
    <property type="entry name" value="K5RBV"/>
</dbReference>
<dbReference type="SMR" id="P03984"/>
<dbReference type="FunCoup" id="P03984">
    <property type="interactions" value="58"/>
</dbReference>
<dbReference type="STRING" id="9986.ENSOCUP00000020466"/>
<dbReference type="PaxDb" id="9986-ENSOCUP00000020466"/>
<dbReference type="Ensembl" id="ENSOCUT00000030730.3">
    <property type="protein sequence ID" value="ENSOCUP00000020466.3"/>
    <property type="gene ID" value="ENSOCUG00000025374.3"/>
</dbReference>
<dbReference type="eggNOG" id="ENOG502SAG4">
    <property type="taxonomic scope" value="Eukaryota"/>
</dbReference>
<dbReference type="GeneTree" id="ENSGT00940000163478"/>
<dbReference type="InParanoid" id="P03984"/>
<dbReference type="Proteomes" id="UP000001811">
    <property type="component" value="Chromosome 2"/>
</dbReference>
<dbReference type="Bgee" id="ENSOCUG00000025374">
    <property type="expression patterns" value="Expressed in ovary and 13 other cell types or tissues"/>
</dbReference>
<dbReference type="ExpressionAtlas" id="P03984">
    <property type="expression patterns" value="baseline"/>
</dbReference>
<dbReference type="FunFam" id="2.60.40.10:FF:000283">
    <property type="entry name" value="Immunoglobulin kappa constant"/>
    <property type="match status" value="1"/>
</dbReference>
<dbReference type="Gene3D" id="2.60.40.10">
    <property type="entry name" value="Immunoglobulins"/>
    <property type="match status" value="1"/>
</dbReference>
<dbReference type="InterPro" id="IPR007110">
    <property type="entry name" value="Ig-like_dom"/>
</dbReference>
<dbReference type="InterPro" id="IPR036179">
    <property type="entry name" value="Ig-like_dom_sf"/>
</dbReference>
<dbReference type="InterPro" id="IPR013783">
    <property type="entry name" value="Ig-like_fold"/>
</dbReference>
<dbReference type="InterPro" id="IPR003597">
    <property type="entry name" value="Ig_C1-set"/>
</dbReference>
<dbReference type="InterPro" id="IPR050380">
    <property type="entry name" value="Immune_Resp_Modulators"/>
</dbReference>
<dbReference type="PANTHER" id="PTHR23411">
    <property type="entry name" value="TAPASIN"/>
    <property type="match status" value="1"/>
</dbReference>
<dbReference type="Pfam" id="PF07654">
    <property type="entry name" value="C1-set"/>
    <property type="match status" value="1"/>
</dbReference>
<dbReference type="SMART" id="SM00407">
    <property type="entry name" value="IGc1"/>
    <property type="match status" value="1"/>
</dbReference>
<dbReference type="SUPFAM" id="SSF48726">
    <property type="entry name" value="Immunoglobulin"/>
    <property type="match status" value="1"/>
</dbReference>
<dbReference type="PROSITE" id="PS50835">
    <property type="entry name" value="IG_LIKE"/>
    <property type="match status" value="1"/>
</dbReference>
<sequence>ATLAPTVLIFPPSPAELATGTATIVCVANKYFPDGTVTWQVDGKPLTTGIETSKTPQNSDDCTYNLSSTLTLKSDEYNSHDEYTCQVAQGSGSPVVQSFSRKNC</sequence>
<reference key="1">
    <citation type="journal article" date="1983" name="Nucleic Acids Res.">
        <title>The sequences of rabbit kappa light chains of b4 and b5 allotypes differ more in their constant regions than in their 3' untranslated regions.</title>
        <authorList>
            <person name="Bernstein K.E."/>
            <person name="Skurla R.M. Jr."/>
            <person name="Mage R.G."/>
        </authorList>
    </citation>
    <scope>NUCLEOTIDE SEQUENCE [MRNA] (CLONE PKB5-F2)</scope>
</reference>
<reference key="2">
    <citation type="journal article" date="1984" name="Proc. Natl. Acad. Sci. U.S.A.">
        <title>A genomic gene encoding the b5 rabbit immunoglobulin kappa constant region: implications for latent allotype phenomenon.</title>
        <authorList>
            <person name="Emorine L."/>
            <person name="Sogn J.A."/>
            <person name="Trinh D."/>
            <person name="Kindt T.J."/>
            <person name="Max E.E."/>
        </authorList>
    </citation>
    <scope>NUCLEOTIDE SEQUENCE [GENOMIC DNA]</scope>
</reference>
<protein>
    <recommendedName>
        <fullName>Ig kappa chain b5 variant C region</fullName>
    </recommendedName>
</protein>